<sequence length="411" mass="47844">MEELLERVFSFSDVDKLIDFISYELQKPVILESADFFLLAYNSYYINHFDSANQQTIFSKKCPVQIFERFLKDGIIEKLKTEPEPFRVNKIESIGLNQRVVVSAKHKGEVMGYIWIQELDQNLTDEELDFLYETSFHVGKIIYKTNKLKQEKEEKAEDLIKRAIYQQFTSEKELRREAERINTVLPSMFSVVILHAANGDGEAVEDLKENIRSYLNLRDKVSHVLTIESNIVIVVASFSQKSSVSSAASEFINKLLTHFHFQKIPTPIYIGIGNEYNHLLKLGKSYTEALEVIKAAEITGNQENIPYEYAKLGIYRYLESIEQKNEFLEYENKDLALLKAKDEESSTELLKTLEIYLLNNCKTKPAAEQLFIHQNTLNYRIKQITEMTSIDLSDFRTRCQLYLDLMLMKKK</sequence>
<feature type="chain" id="PRO_0000165947" description="Proline-responsive transcriptional activator PutR">
    <location>
        <begin position="1"/>
        <end position="411"/>
    </location>
</feature>
<feature type="sequence conflict" description="In Ref. 1; BAA08957." evidence="6" ref="1">
    <original>I</original>
    <variation>V</variation>
    <location>
        <position position="355"/>
    </location>
</feature>
<name>PUTR_BACSU</name>
<comment type="function">
    <text evidence="1 2 3">Activates transcription of the putBCP operon. Requires proline as a coactivator.</text>
</comment>
<comment type="induction">
    <text evidence="2">PrcR expression is not subject to autoregulation and proline induction.</text>
</comment>
<comment type="disruption phenotype">
    <text evidence="1 2">Mutant loses the ability to utilize proline as either sole nitrogen or sole carbon source.</text>
</comment>
<comment type="similarity">
    <text evidence="6">Belongs to the CdaR family.</text>
</comment>
<evidence type="ECO:0000269" key="1">
    <source>
    </source>
</evidence>
<evidence type="ECO:0000269" key="2">
    <source>
    </source>
</evidence>
<evidence type="ECO:0000269" key="3">
    <source>
    </source>
</evidence>
<evidence type="ECO:0000303" key="4">
    <source>
    </source>
</evidence>
<evidence type="ECO:0000303" key="5">
    <source>
    </source>
</evidence>
<evidence type="ECO:0000305" key="6"/>
<proteinExistence type="evidence at protein level"/>
<protein>
    <recommendedName>
        <fullName evidence="4">Proline-responsive transcriptional activator PutR</fullName>
    </recommendedName>
    <alternativeName>
        <fullName evidence="5">Proline catabolism regulator</fullName>
    </alternativeName>
</protein>
<reference key="1">
    <citation type="journal article" date="1996" name="Microbiology">
        <title>The 25 degrees-36 degrees region of the Bacillus subtilis chromosome: determination of the sequence of a 146 kb segment and identification of 113 genes.</title>
        <authorList>
            <person name="Yamane K."/>
            <person name="Kumano M."/>
            <person name="Kurita K."/>
        </authorList>
    </citation>
    <scope>NUCLEOTIDE SEQUENCE [GENOMIC DNA]</scope>
    <source>
        <strain>168</strain>
    </source>
</reference>
<reference key="2">
    <citation type="journal article" date="1997" name="Nature">
        <title>The complete genome sequence of the Gram-positive bacterium Bacillus subtilis.</title>
        <authorList>
            <person name="Kunst F."/>
            <person name="Ogasawara N."/>
            <person name="Moszer I."/>
            <person name="Albertini A.M."/>
            <person name="Alloni G."/>
            <person name="Azevedo V."/>
            <person name="Bertero M.G."/>
            <person name="Bessieres P."/>
            <person name="Bolotin A."/>
            <person name="Borchert S."/>
            <person name="Borriss R."/>
            <person name="Boursier L."/>
            <person name="Brans A."/>
            <person name="Braun M."/>
            <person name="Brignell S.C."/>
            <person name="Bron S."/>
            <person name="Brouillet S."/>
            <person name="Bruschi C.V."/>
            <person name="Caldwell B."/>
            <person name="Capuano V."/>
            <person name="Carter N.M."/>
            <person name="Choi S.-K."/>
            <person name="Codani J.-J."/>
            <person name="Connerton I.F."/>
            <person name="Cummings N.J."/>
            <person name="Daniel R.A."/>
            <person name="Denizot F."/>
            <person name="Devine K.M."/>
            <person name="Duesterhoeft A."/>
            <person name="Ehrlich S.D."/>
            <person name="Emmerson P.T."/>
            <person name="Entian K.-D."/>
            <person name="Errington J."/>
            <person name="Fabret C."/>
            <person name="Ferrari E."/>
            <person name="Foulger D."/>
            <person name="Fritz C."/>
            <person name="Fujita M."/>
            <person name="Fujita Y."/>
            <person name="Fuma S."/>
            <person name="Galizzi A."/>
            <person name="Galleron N."/>
            <person name="Ghim S.-Y."/>
            <person name="Glaser P."/>
            <person name="Goffeau A."/>
            <person name="Golightly E.J."/>
            <person name="Grandi G."/>
            <person name="Guiseppi G."/>
            <person name="Guy B.J."/>
            <person name="Haga K."/>
            <person name="Haiech J."/>
            <person name="Harwood C.R."/>
            <person name="Henaut A."/>
            <person name="Hilbert H."/>
            <person name="Holsappel S."/>
            <person name="Hosono S."/>
            <person name="Hullo M.-F."/>
            <person name="Itaya M."/>
            <person name="Jones L.-M."/>
            <person name="Joris B."/>
            <person name="Karamata D."/>
            <person name="Kasahara Y."/>
            <person name="Klaerr-Blanchard M."/>
            <person name="Klein C."/>
            <person name="Kobayashi Y."/>
            <person name="Koetter P."/>
            <person name="Koningstein G."/>
            <person name="Krogh S."/>
            <person name="Kumano M."/>
            <person name="Kurita K."/>
            <person name="Lapidus A."/>
            <person name="Lardinois S."/>
            <person name="Lauber J."/>
            <person name="Lazarevic V."/>
            <person name="Lee S.-M."/>
            <person name="Levine A."/>
            <person name="Liu H."/>
            <person name="Masuda S."/>
            <person name="Mauel C."/>
            <person name="Medigue C."/>
            <person name="Medina N."/>
            <person name="Mellado R.P."/>
            <person name="Mizuno M."/>
            <person name="Moestl D."/>
            <person name="Nakai S."/>
            <person name="Noback M."/>
            <person name="Noone D."/>
            <person name="O'Reilly M."/>
            <person name="Ogawa K."/>
            <person name="Ogiwara A."/>
            <person name="Oudega B."/>
            <person name="Park S.-H."/>
            <person name="Parro V."/>
            <person name="Pohl T.M."/>
            <person name="Portetelle D."/>
            <person name="Porwollik S."/>
            <person name="Prescott A.M."/>
            <person name="Presecan E."/>
            <person name="Pujic P."/>
            <person name="Purnelle B."/>
            <person name="Rapoport G."/>
            <person name="Rey M."/>
            <person name="Reynolds S."/>
            <person name="Rieger M."/>
            <person name="Rivolta C."/>
            <person name="Rocha E."/>
            <person name="Roche B."/>
            <person name="Rose M."/>
            <person name="Sadaie Y."/>
            <person name="Sato T."/>
            <person name="Scanlan E."/>
            <person name="Schleich S."/>
            <person name="Schroeter R."/>
            <person name="Scoffone F."/>
            <person name="Sekiguchi J."/>
            <person name="Sekowska A."/>
            <person name="Seror S.J."/>
            <person name="Serror P."/>
            <person name="Shin B.-S."/>
            <person name="Soldo B."/>
            <person name="Sorokin A."/>
            <person name="Tacconi E."/>
            <person name="Takagi T."/>
            <person name="Takahashi H."/>
            <person name="Takemaru K."/>
            <person name="Takeuchi M."/>
            <person name="Tamakoshi A."/>
            <person name="Tanaka T."/>
            <person name="Terpstra P."/>
            <person name="Tognoni A."/>
            <person name="Tosato V."/>
            <person name="Uchiyama S."/>
            <person name="Vandenbol M."/>
            <person name="Vannier F."/>
            <person name="Vassarotti A."/>
            <person name="Viari A."/>
            <person name="Wambutt R."/>
            <person name="Wedler E."/>
            <person name="Wedler H."/>
            <person name="Weitzenegger T."/>
            <person name="Winters P."/>
            <person name="Wipat A."/>
            <person name="Yamamoto H."/>
            <person name="Yamane K."/>
            <person name="Yasumoto K."/>
            <person name="Yata K."/>
            <person name="Yoshida K."/>
            <person name="Yoshikawa H.-F."/>
            <person name="Zumstein E."/>
            <person name="Yoshikawa H."/>
            <person name="Danchin A."/>
        </authorList>
    </citation>
    <scope>NUCLEOTIDE SEQUENCE [LARGE SCALE GENOMIC DNA]</scope>
    <source>
        <strain>168</strain>
    </source>
</reference>
<reference key="3">
    <citation type="journal article" date="2009" name="Microbiology">
        <title>From a consortium sequence to a unified sequence: the Bacillus subtilis 168 reference genome a decade later.</title>
        <authorList>
            <person name="Barbe V."/>
            <person name="Cruveiller S."/>
            <person name="Kunst F."/>
            <person name="Lenoble P."/>
            <person name="Meurice G."/>
            <person name="Sekowska A."/>
            <person name="Vallenet D."/>
            <person name="Wang T."/>
            <person name="Moszer I."/>
            <person name="Medigue C."/>
            <person name="Danchin A."/>
        </authorList>
    </citation>
    <scope>SEQUENCE REVISION TO 355</scope>
</reference>
<reference key="4">
    <citation type="journal article" date="2011" name="J. Mol. Biol.">
        <title>Indirect repression by Bacillus subtilis CodY via displacement of the activator of the proline utilization operon.</title>
        <authorList>
            <person name="Belitsky B.R."/>
        </authorList>
    </citation>
    <scope>FUNCTION</scope>
    <scope>DNA-BINDING</scope>
    <scope>DISRUPTION PHENOTYPE</scope>
</reference>
<reference key="5">
    <citation type="journal article" date="2011" name="Microbiology">
        <title>PrcR, a PucR-type transcriptional activator, is essential for proline utilization and mediates proline-responsive expression of the proline utilization operon putBCP in Bacillus subtilis.</title>
        <authorList>
            <person name="Huang S.C."/>
            <person name="Lin T.H."/>
            <person name="Shaw G.C."/>
        </authorList>
    </citation>
    <scope>FUNCTION</scope>
    <scope>DNA-BINDING</scope>
    <scope>DISRUPTION PHENOTYPE</scope>
    <scope>INDUCTION</scope>
    <source>
        <strain>168</strain>
    </source>
</reference>
<reference key="6">
    <citation type="journal article" date="2012" name="J. Bacteriol.">
        <title>Proline utilization by Bacillus subtilis: uptake and catabolism.</title>
        <authorList>
            <person name="Moses S."/>
            <person name="Sinner T."/>
            <person name="Zaprasis A."/>
            <person name="Stoeveken N."/>
            <person name="Hoffmann T."/>
            <person name="Belitsky B.R."/>
            <person name="Sonenshein A.L."/>
            <person name="Bremer E."/>
        </authorList>
    </citation>
    <scope>FUNCTION</scope>
    <source>
        <strain>168 / JH642</strain>
    </source>
</reference>
<organism>
    <name type="scientific">Bacillus subtilis (strain 168)</name>
    <dbReference type="NCBI Taxonomy" id="224308"/>
    <lineage>
        <taxon>Bacteria</taxon>
        <taxon>Bacillati</taxon>
        <taxon>Bacillota</taxon>
        <taxon>Bacilli</taxon>
        <taxon>Bacillales</taxon>
        <taxon>Bacillaceae</taxon>
        <taxon>Bacillus</taxon>
    </lineage>
</organism>
<keyword id="KW-0010">Activator</keyword>
<keyword id="KW-0238">DNA-binding</keyword>
<keyword id="KW-1185">Reference proteome</keyword>
<keyword id="KW-0804">Transcription</keyword>
<keyword id="KW-0805">Transcription regulation</keyword>
<accession>P94393</accession>
<gene>
    <name evidence="4" type="primary">putR</name>
    <name evidence="5" type="synonym">prcR</name>
    <name type="synonym">ycgP</name>
    <name type="ordered locus">BSU03230</name>
</gene>
<dbReference type="EMBL" id="D50453">
    <property type="protein sequence ID" value="BAA08957.1"/>
    <property type="molecule type" value="Genomic_DNA"/>
</dbReference>
<dbReference type="EMBL" id="AL009126">
    <property type="protein sequence ID" value="CAB12117.2"/>
    <property type="molecule type" value="Genomic_DNA"/>
</dbReference>
<dbReference type="PIR" id="C69759">
    <property type="entry name" value="C69759"/>
</dbReference>
<dbReference type="RefSeq" id="NP_388205.2">
    <property type="nucleotide sequence ID" value="NC_000964.3"/>
</dbReference>
<dbReference type="RefSeq" id="WP_003234651.1">
    <property type="nucleotide sequence ID" value="NZ_OZ025638.1"/>
</dbReference>
<dbReference type="SMR" id="P94393"/>
<dbReference type="FunCoup" id="P94393">
    <property type="interactions" value="38"/>
</dbReference>
<dbReference type="STRING" id="224308.BSU03230"/>
<dbReference type="PaxDb" id="224308-BSU03230"/>
<dbReference type="DNASU" id="938337"/>
<dbReference type="EnsemblBacteria" id="CAB12117">
    <property type="protein sequence ID" value="CAB12117"/>
    <property type="gene ID" value="BSU_03230"/>
</dbReference>
<dbReference type="GeneID" id="938337"/>
<dbReference type="KEGG" id="bsu:BSU03230"/>
<dbReference type="PATRIC" id="fig|224308.179.peg.337"/>
<dbReference type="eggNOG" id="COG2508">
    <property type="taxonomic scope" value="Bacteria"/>
</dbReference>
<dbReference type="InParanoid" id="P94393"/>
<dbReference type="OrthoDB" id="9792148at2"/>
<dbReference type="PhylomeDB" id="P94393"/>
<dbReference type="BioCyc" id="BSUB:BSU03230-MONOMER"/>
<dbReference type="Proteomes" id="UP000001570">
    <property type="component" value="Chromosome"/>
</dbReference>
<dbReference type="GO" id="GO:0003677">
    <property type="term" value="F:DNA binding"/>
    <property type="evidence" value="ECO:0007669"/>
    <property type="project" value="UniProtKB-KW"/>
</dbReference>
<dbReference type="GO" id="GO:0003700">
    <property type="term" value="F:DNA-binding transcription factor activity"/>
    <property type="evidence" value="ECO:0000318"/>
    <property type="project" value="GO_Central"/>
</dbReference>
<dbReference type="GO" id="GO:0045893">
    <property type="term" value="P:positive regulation of DNA-templated transcription"/>
    <property type="evidence" value="ECO:0000318"/>
    <property type="project" value="GO_Central"/>
</dbReference>
<dbReference type="Gene3D" id="1.10.10.2840">
    <property type="entry name" value="PucR C-terminal helix-turn-helix domain"/>
    <property type="match status" value="1"/>
</dbReference>
<dbReference type="InterPro" id="IPR051448">
    <property type="entry name" value="CdaR-like_regulators"/>
</dbReference>
<dbReference type="InterPro" id="IPR041522">
    <property type="entry name" value="CdaR_GGDEF"/>
</dbReference>
<dbReference type="InterPro" id="IPR025736">
    <property type="entry name" value="PucR_C-HTH_dom"/>
</dbReference>
<dbReference type="InterPro" id="IPR042070">
    <property type="entry name" value="PucR_C-HTH_sf"/>
</dbReference>
<dbReference type="PANTHER" id="PTHR33744">
    <property type="entry name" value="CARBOHYDRATE DIACID REGULATOR"/>
    <property type="match status" value="1"/>
</dbReference>
<dbReference type="PANTHER" id="PTHR33744:SF1">
    <property type="entry name" value="DNA-BINDING TRANSCRIPTIONAL ACTIVATOR ADER"/>
    <property type="match status" value="1"/>
</dbReference>
<dbReference type="Pfam" id="PF17853">
    <property type="entry name" value="GGDEF_2"/>
    <property type="match status" value="1"/>
</dbReference>
<dbReference type="Pfam" id="PF13556">
    <property type="entry name" value="HTH_30"/>
    <property type="match status" value="1"/>
</dbReference>